<accession>P57021</accession>
<accession>Q7PCI8</accession>
<comment type="function">
    <text evidence="1">Involved in O antigen modification. Involved in the translocation of bactoprenol-linked glucose across the cytoplasmic membrane (By similarity).</text>
</comment>
<comment type="subcellular location">
    <subcellularLocation>
        <location evidence="3">Host membrane</location>
        <topology evidence="3">Multi-pass membrane protein</topology>
    </subcellularLocation>
</comment>
<comment type="similarity">
    <text evidence="3">Belongs to the GtrA family.</text>
</comment>
<organismHost>
    <name type="scientific">Salmonella typhimurium</name>
    <dbReference type="NCBI Taxonomy" id="90371"/>
</organismHost>
<reference key="1">
    <citation type="journal article" date="2000" name="J. Bacteriol.">
        <title>Sequence of the genome of Salmonella bacteriophage P22.</title>
        <authorList>
            <person name="Vander Byl C.S."/>
            <person name="Kropinski A.M.B."/>
        </authorList>
    </citation>
    <scope>NUCLEOTIDE SEQUENCE [LARGE SCALE GENOMIC DNA]</scope>
</reference>
<reference key="2">
    <citation type="journal article" date="2003" name="J. Bacteriol.">
        <title>Corrected sequence of the bacteriophage P22 genome.</title>
        <authorList>
            <person name="Pedulla M.L."/>
            <person name="Ford M.E."/>
            <person name="Karthikeyan T."/>
            <person name="Houtz J.M."/>
            <person name="Hendrix R.W."/>
            <person name="Hatfull G.F."/>
            <person name="Poteete A.R."/>
            <person name="Gilcrease E.B."/>
            <person name="Winn-Stapley D.A."/>
            <person name="Casjens S.R."/>
        </authorList>
    </citation>
    <scope>NUCLEOTIDE SEQUENCE [LARGE SCALE GENOMIC DNA]</scope>
</reference>
<keyword id="KW-1043">Host membrane</keyword>
<keyword id="KW-0472">Membrane</keyword>
<keyword id="KW-1185">Reference proteome</keyword>
<keyword id="KW-0812">Transmembrane</keyword>
<keyword id="KW-1133">Transmembrane helix</keyword>
<keyword id="KW-0813">Transport</keyword>
<organism>
    <name type="scientific">Salmonella phage P22</name>
    <name type="common">Bacteriophage P22</name>
    <dbReference type="NCBI Taxonomy" id="10754"/>
    <lineage>
        <taxon>Viruses</taxon>
        <taxon>Duplodnaviria</taxon>
        <taxon>Heunggongvirae</taxon>
        <taxon>Uroviricota</taxon>
        <taxon>Caudoviricetes</taxon>
        <taxon>Lederbergvirus</taxon>
    </lineage>
</organism>
<proteinExistence type="inferred from homology"/>
<feature type="chain" id="PRO_0000212247" description="Bactoprenol-linked glucose translocase">
    <location>
        <begin position="1"/>
        <end position="120"/>
    </location>
</feature>
<feature type="transmembrane region" description="Helical" evidence="2">
    <location>
        <begin position="10"/>
        <end position="30"/>
    </location>
</feature>
<feature type="transmembrane region" description="Helical" evidence="2">
    <location>
        <begin position="34"/>
        <end position="54"/>
    </location>
</feature>
<feature type="transmembrane region" description="Helical" evidence="2">
    <location>
        <begin position="65"/>
        <end position="85"/>
    </location>
</feature>
<feature type="transmembrane region" description="Helical" evidence="2">
    <location>
        <begin position="90"/>
        <end position="110"/>
    </location>
</feature>
<dbReference type="EMBL" id="AF217253">
    <property type="protein sequence ID" value="AAF75001.1"/>
    <property type="molecule type" value="Genomic_DNA"/>
</dbReference>
<dbReference type="EMBL" id="BK000583">
    <property type="protein sequence ID" value="DAA00984.1"/>
    <property type="molecule type" value="Genomic_DNA"/>
</dbReference>
<dbReference type="RefSeq" id="NP_059583.1">
    <property type="nucleotide sequence ID" value="NC_002371.2"/>
</dbReference>
<dbReference type="SMR" id="P57021"/>
<dbReference type="GeneID" id="1262849"/>
<dbReference type="KEGG" id="vg:1262849"/>
<dbReference type="OrthoDB" id="17195at10239"/>
<dbReference type="Proteomes" id="UP000001795">
    <property type="component" value="Segment"/>
</dbReference>
<dbReference type="Proteomes" id="UP000007960">
    <property type="component" value="Segment"/>
</dbReference>
<dbReference type="GO" id="GO:0033644">
    <property type="term" value="C:host cell membrane"/>
    <property type="evidence" value="ECO:0007669"/>
    <property type="project" value="UniProtKB-SubCell"/>
</dbReference>
<dbReference type="GO" id="GO:0005886">
    <property type="term" value="C:plasma membrane"/>
    <property type="evidence" value="ECO:0007669"/>
    <property type="project" value="TreeGrafter"/>
</dbReference>
<dbReference type="GO" id="GO:0000271">
    <property type="term" value="P:polysaccharide biosynthetic process"/>
    <property type="evidence" value="ECO:0007669"/>
    <property type="project" value="InterPro"/>
</dbReference>
<dbReference type="InterPro" id="IPR016480">
    <property type="entry name" value="Glc_translocase_bactprenl-link"/>
</dbReference>
<dbReference type="InterPro" id="IPR051401">
    <property type="entry name" value="GtrA_CellWall_Glycosyl"/>
</dbReference>
<dbReference type="InterPro" id="IPR007267">
    <property type="entry name" value="GtrA_DPMS_TM"/>
</dbReference>
<dbReference type="PANTHER" id="PTHR38459">
    <property type="entry name" value="PROPHAGE BACTOPRENOL-LINKED GLUCOSE TRANSLOCASE HOMOLOG"/>
    <property type="match status" value="1"/>
</dbReference>
<dbReference type="PANTHER" id="PTHR38459:SF1">
    <property type="entry name" value="PROPHAGE BACTOPRENOL-LINKED GLUCOSE TRANSLOCASE HOMOLOG"/>
    <property type="match status" value="1"/>
</dbReference>
<dbReference type="Pfam" id="PF04138">
    <property type="entry name" value="GtrA_DPMS_TM"/>
    <property type="match status" value="1"/>
</dbReference>
<dbReference type="PIRSF" id="PIRSF006298">
    <property type="entry name" value="GtrA_prd"/>
    <property type="match status" value="1"/>
</dbReference>
<protein>
    <recommendedName>
        <fullName>Bactoprenol-linked glucose translocase</fullName>
    </recommendedName>
</protein>
<name>GTRA_BPP22</name>
<gene>
    <name type="primary">gtrA</name>
</gene>
<sequence>MLKLFAKYTSIGVLNTLIHWGVFAFCVYGMHTHQALANFSGFVIAVSFSFYANARFTFNATTTTLRYMMYVGFMGTLSAVVGWMADQCSLPPLITLITFSAISLVCGFIYSRFIVFRDIR</sequence>
<evidence type="ECO:0000250" key="1"/>
<evidence type="ECO:0000255" key="2"/>
<evidence type="ECO:0000305" key="3"/>